<sequence>MTSQLHKKGEAWSARFSEPMSELVKRYTSSVFFDKRLALVDIAGSLAHANMLAAQKIISADDLAAIERGMAQIKGEIERGEFEWQLDLEDVHLNIEARLTALIGDAGKRLHTGRSRNDQVATDIRLWLRGEIDRIGGLLNDLRGALIDLAEQNADTIMPGFTHLQVAQPVTFGHHLLAYVEMFTRDAERMRDCRTRVNRLPLGAAALAGTSYSIDRHAVAKTLGFDGICANSLDAVSDRDFAIEFTAASALVMTHVSRFSEELVLWMSPRVGFIDIADRFCTGSSIMPQKKNPDVPELARGKTGRVNGHLMALLTLMKGQPLAYNKDNQEDKEPLFDTVDTVADTLRIFAEMAAGITVKPDAMRAAALQGFSTATDLADYLVKRGLPFRDAHEAVAHAVKICDDRGIDLADLTLDEMKQELPNVAHLIGDDVFGYLTLEGSVASRNHPGGTAPDQVRAAVKAARAALAK</sequence>
<protein>
    <recommendedName>
        <fullName evidence="1">Argininosuccinate lyase</fullName>
        <shortName evidence="1">ASAL</shortName>
        <ecNumber evidence="1">4.3.2.1</ecNumber>
    </recommendedName>
    <alternativeName>
        <fullName evidence="1">Arginosuccinase</fullName>
    </alternativeName>
</protein>
<name>ARLY_BURO0</name>
<reference key="1">
    <citation type="submission" date="2008-02" db="EMBL/GenBank/DDBJ databases">
        <title>Complete sequence of chromosome 1 of Burkholderia cenocepacia MC0-3.</title>
        <authorList>
            <person name="Copeland A."/>
            <person name="Lucas S."/>
            <person name="Lapidus A."/>
            <person name="Barry K."/>
            <person name="Bruce D."/>
            <person name="Goodwin L."/>
            <person name="Glavina del Rio T."/>
            <person name="Dalin E."/>
            <person name="Tice H."/>
            <person name="Pitluck S."/>
            <person name="Chain P."/>
            <person name="Malfatti S."/>
            <person name="Shin M."/>
            <person name="Vergez L."/>
            <person name="Schmutz J."/>
            <person name="Larimer F."/>
            <person name="Land M."/>
            <person name="Hauser L."/>
            <person name="Kyrpides N."/>
            <person name="Mikhailova N."/>
            <person name="Tiedje J."/>
            <person name="Richardson P."/>
        </authorList>
    </citation>
    <scope>NUCLEOTIDE SEQUENCE [LARGE SCALE GENOMIC DNA]</scope>
    <source>
        <strain>MC0-3</strain>
    </source>
</reference>
<organism>
    <name type="scientific">Burkholderia orbicola (strain MC0-3)</name>
    <dbReference type="NCBI Taxonomy" id="406425"/>
    <lineage>
        <taxon>Bacteria</taxon>
        <taxon>Pseudomonadati</taxon>
        <taxon>Pseudomonadota</taxon>
        <taxon>Betaproteobacteria</taxon>
        <taxon>Burkholderiales</taxon>
        <taxon>Burkholderiaceae</taxon>
        <taxon>Burkholderia</taxon>
        <taxon>Burkholderia cepacia complex</taxon>
        <taxon>Burkholderia orbicola</taxon>
    </lineage>
</organism>
<accession>B1JWR5</accession>
<feature type="chain" id="PRO_1000089069" description="Argininosuccinate lyase">
    <location>
        <begin position="1"/>
        <end position="469"/>
    </location>
</feature>
<dbReference type="EC" id="4.3.2.1" evidence="1"/>
<dbReference type="EMBL" id="CP000958">
    <property type="protein sequence ID" value="ACA91595.1"/>
    <property type="molecule type" value="Genomic_DNA"/>
</dbReference>
<dbReference type="RefSeq" id="WP_012329004.1">
    <property type="nucleotide sequence ID" value="NC_010508.1"/>
</dbReference>
<dbReference type="SMR" id="B1JWR5"/>
<dbReference type="GeneID" id="83049224"/>
<dbReference type="KEGG" id="bcm:Bcenmc03_2434"/>
<dbReference type="HOGENOM" id="CLU_027272_2_3_4"/>
<dbReference type="UniPathway" id="UPA00068">
    <property type="reaction ID" value="UER00114"/>
</dbReference>
<dbReference type="Proteomes" id="UP000002169">
    <property type="component" value="Chromosome 1"/>
</dbReference>
<dbReference type="GO" id="GO:0005829">
    <property type="term" value="C:cytosol"/>
    <property type="evidence" value="ECO:0007669"/>
    <property type="project" value="TreeGrafter"/>
</dbReference>
<dbReference type="GO" id="GO:0004056">
    <property type="term" value="F:argininosuccinate lyase activity"/>
    <property type="evidence" value="ECO:0007669"/>
    <property type="project" value="UniProtKB-UniRule"/>
</dbReference>
<dbReference type="GO" id="GO:0042450">
    <property type="term" value="P:arginine biosynthetic process via ornithine"/>
    <property type="evidence" value="ECO:0007669"/>
    <property type="project" value="InterPro"/>
</dbReference>
<dbReference type="GO" id="GO:0006526">
    <property type="term" value="P:L-arginine biosynthetic process"/>
    <property type="evidence" value="ECO:0007669"/>
    <property type="project" value="UniProtKB-UniRule"/>
</dbReference>
<dbReference type="CDD" id="cd01359">
    <property type="entry name" value="Argininosuccinate_lyase"/>
    <property type="match status" value="1"/>
</dbReference>
<dbReference type="FunFam" id="1.10.275.10:FF:000002">
    <property type="entry name" value="Argininosuccinate lyase"/>
    <property type="match status" value="1"/>
</dbReference>
<dbReference type="FunFam" id="1.10.40.30:FF:000001">
    <property type="entry name" value="Argininosuccinate lyase"/>
    <property type="match status" value="1"/>
</dbReference>
<dbReference type="FunFam" id="1.20.200.10:FF:000015">
    <property type="entry name" value="argininosuccinate lyase isoform X2"/>
    <property type="match status" value="1"/>
</dbReference>
<dbReference type="Gene3D" id="1.10.40.30">
    <property type="entry name" value="Fumarase/aspartase (C-terminal domain)"/>
    <property type="match status" value="1"/>
</dbReference>
<dbReference type="Gene3D" id="1.20.200.10">
    <property type="entry name" value="Fumarase/aspartase (Central domain)"/>
    <property type="match status" value="1"/>
</dbReference>
<dbReference type="Gene3D" id="1.10.275.10">
    <property type="entry name" value="Fumarase/aspartase (N-terminal domain)"/>
    <property type="match status" value="1"/>
</dbReference>
<dbReference type="HAMAP" id="MF_00006">
    <property type="entry name" value="Arg_succ_lyase"/>
    <property type="match status" value="1"/>
</dbReference>
<dbReference type="InterPro" id="IPR029419">
    <property type="entry name" value="Arg_succ_lyase_C"/>
</dbReference>
<dbReference type="InterPro" id="IPR009049">
    <property type="entry name" value="Argininosuccinate_lyase"/>
</dbReference>
<dbReference type="InterPro" id="IPR024083">
    <property type="entry name" value="Fumarase/histidase_N"/>
</dbReference>
<dbReference type="InterPro" id="IPR020557">
    <property type="entry name" value="Fumarate_lyase_CS"/>
</dbReference>
<dbReference type="InterPro" id="IPR000362">
    <property type="entry name" value="Fumarate_lyase_fam"/>
</dbReference>
<dbReference type="InterPro" id="IPR022761">
    <property type="entry name" value="Fumarate_lyase_N"/>
</dbReference>
<dbReference type="InterPro" id="IPR008948">
    <property type="entry name" value="L-Aspartase-like"/>
</dbReference>
<dbReference type="NCBIfam" id="TIGR00838">
    <property type="entry name" value="argH"/>
    <property type="match status" value="1"/>
</dbReference>
<dbReference type="PANTHER" id="PTHR43814">
    <property type="entry name" value="ARGININOSUCCINATE LYASE"/>
    <property type="match status" value="1"/>
</dbReference>
<dbReference type="PANTHER" id="PTHR43814:SF1">
    <property type="entry name" value="ARGININOSUCCINATE LYASE"/>
    <property type="match status" value="1"/>
</dbReference>
<dbReference type="Pfam" id="PF14698">
    <property type="entry name" value="ASL_C2"/>
    <property type="match status" value="1"/>
</dbReference>
<dbReference type="Pfam" id="PF00206">
    <property type="entry name" value="Lyase_1"/>
    <property type="match status" value="1"/>
</dbReference>
<dbReference type="PRINTS" id="PR00145">
    <property type="entry name" value="ARGSUCLYASE"/>
</dbReference>
<dbReference type="PRINTS" id="PR00149">
    <property type="entry name" value="FUMRATELYASE"/>
</dbReference>
<dbReference type="SUPFAM" id="SSF48557">
    <property type="entry name" value="L-aspartase-like"/>
    <property type="match status" value="1"/>
</dbReference>
<dbReference type="PROSITE" id="PS00163">
    <property type="entry name" value="FUMARATE_LYASES"/>
    <property type="match status" value="1"/>
</dbReference>
<proteinExistence type="inferred from homology"/>
<evidence type="ECO:0000255" key="1">
    <source>
        <dbReference type="HAMAP-Rule" id="MF_00006"/>
    </source>
</evidence>
<gene>
    <name evidence="1" type="primary">argH</name>
    <name type="ordered locus">Bcenmc03_2434</name>
</gene>
<keyword id="KW-0028">Amino-acid biosynthesis</keyword>
<keyword id="KW-0055">Arginine biosynthesis</keyword>
<keyword id="KW-0963">Cytoplasm</keyword>
<keyword id="KW-0456">Lyase</keyword>
<comment type="catalytic activity">
    <reaction evidence="1">
        <text>2-(N(omega)-L-arginino)succinate = fumarate + L-arginine</text>
        <dbReference type="Rhea" id="RHEA:24020"/>
        <dbReference type="ChEBI" id="CHEBI:29806"/>
        <dbReference type="ChEBI" id="CHEBI:32682"/>
        <dbReference type="ChEBI" id="CHEBI:57472"/>
        <dbReference type="EC" id="4.3.2.1"/>
    </reaction>
</comment>
<comment type="pathway">
    <text evidence="1">Amino-acid biosynthesis; L-arginine biosynthesis; L-arginine from L-ornithine and carbamoyl phosphate: step 3/3.</text>
</comment>
<comment type="subcellular location">
    <subcellularLocation>
        <location evidence="1">Cytoplasm</location>
    </subcellularLocation>
</comment>
<comment type="similarity">
    <text evidence="1">Belongs to the lyase 1 family. Argininosuccinate lyase subfamily.</text>
</comment>